<protein>
    <recommendedName>
        <fullName evidence="1">DNA-directed RNA polymerase subunit gamma</fullName>
        <shortName evidence="1">RNAP subunit gamma</shortName>
        <ecNumber evidence="1">2.7.7.6</ecNumber>
    </recommendedName>
    <alternativeName>
        <fullName evidence="1">RNA polymerase subunit gamma</fullName>
    </alternativeName>
    <alternativeName>
        <fullName evidence="1">Transcriptase subunit gamma</fullName>
    </alternativeName>
</protein>
<accession>B7KK78</accession>
<evidence type="ECO:0000255" key="1">
    <source>
        <dbReference type="HAMAP-Rule" id="MF_01323"/>
    </source>
</evidence>
<dbReference type="EC" id="2.7.7.6" evidence="1"/>
<dbReference type="EMBL" id="CP001291">
    <property type="protein sequence ID" value="ACK70963.1"/>
    <property type="molecule type" value="Genomic_DNA"/>
</dbReference>
<dbReference type="RefSeq" id="WP_015954566.1">
    <property type="nucleotide sequence ID" value="NC_011729.1"/>
</dbReference>
<dbReference type="SMR" id="B7KK78"/>
<dbReference type="STRING" id="65393.PCC7424_2547"/>
<dbReference type="KEGG" id="cyc:PCC7424_2547"/>
<dbReference type="eggNOG" id="COG0086">
    <property type="taxonomic scope" value="Bacteria"/>
</dbReference>
<dbReference type="HOGENOM" id="CLU_030022_2_0_3"/>
<dbReference type="OrthoDB" id="9815296at2"/>
<dbReference type="Proteomes" id="UP000002384">
    <property type="component" value="Chromosome"/>
</dbReference>
<dbReference type="GO" id="GO:0000428">
    <property type="term" value="C:DNA-directed RNA polymerase complex"/>
    <property type="evidence" value="ECO:0007669"/>
    <property type="project" value="UniProtKB-KW"/>
</dbReference>
<dbReference type="GO" id="GO:0003677">
    <property type="term" value="F:DNA binding"/>
    <property type="evidence" value="ECO:0007669"/>
    <property type="project" value="UniProtKB-UniRule"/>
</dbReference>
<dbReference type="GO" id="GO:0003899">
    <property type="term" value="F:DNA-directed RNA polymerase activity"/>
    <property type="evidence" value="ECO:0007669"/>
    <property type="project" value="UniProtKB-UniRule"/>
</dbReference>
<dbReference type="GO" id="GO:0000287">
    <property type="term" value="F:magnesium ion binding"/>
    <property type="evidence" value="ECO:0007669"/>
    <property type="project" value="UniProtKB-UniRule"/>
</dbReference>
<dbReference type="GO" id="GO:0008270">
    <property type="term" value="F:zinc ion binding"/>
    <property type="evidence" value="ECO:0007669"/>
    <property type="project" value="UniProtKB-UniRule"/>
</dbReference>
<dbReference type="GO" id="GO:0006351">
    <property type="term" value="P:DNA-templated transcription"/>
    <property type="evidence" value="ECO:0007669"/>
    <property type="project" value="UniProtKB-UniRule"/>
</dbReference>
<dbReference type="Gene3D" id="1.10.40.90">
    <property type="match status" value="1"/>
</dbReference>
<dbReference type="Gene3D" id="2.40.40.20">
    <property type="match status" value="1"/>
</dbReference>
<dbReference type="Gene3D" id="4.10.860.120">
    <property type="entry name" value="RNA polymerase II, clamp domain"/>
    <property type="match status" value="1"/>
</dbReference>
<dbReference type="Gene3D" id="1.10.274.100">
    <property type="entry name" value="RNA polymerase Rpb1, domain 3"/>
    <property type="match status" value="1"/>
</dbReference>
<dbReference type="HAMAP" id="MF_01323">
    <property type="entry name" value="RNApol_bact_RpoC1"/>
    <property type="match status" value="1"/>
</dbReference>
<dbReference type="InterPro" id="IPR012755">
    <property type="entry name" value="DNA-dir_RpoC1_gamma"/>
</dbReference>
<dbReference type="InterPro" id="IPR045867">
    <property type="entry name" value="DNA-dir_RpoC_beta_prime"/>
</dbReference>
<dbReference type="InterPro" id="IPR000722">
    <property type="entry name" value="RNA_pol_asu"/>
</dbReference>
<dbReference type="InterPro" id="IPR006592">
    <property type="entry name" value="RNA_pol_N"/>
</dbReference>
<dbReference type="InterPro" id="IPR007080">
    <property type="entry name" value="RNA_pol_Rpb1_1"/>
</dbReference>
<dbReference type="InterPro" id="IPR007066">
    <property type="entry name" value="RNA_pol_Rpb1_3"/>
</dbReference>
<dbReference type="InterPro" id="IPR042102">
    <property type="entry name" value="RNA_pol_Rpb1_3_sf"/>
</dbReference>
<dbReference type="InterPro" id="IPR044893">
    <property type="entry name" value="RNA_pol_Rpb1_clamp_domain"/>
</dbReference>
<dbReference type="InterPro" id="IPR034678">
    <property type="entry name" value="RNApol_RpoC1"/>
</dbReference>
<dbReference type="NCBIfam" id="NF002729">
    <property type="entry name" value="PRK02625.1"/>
    <property type="match status" value="1"/>
</dbReference>
<dbReference type="NCBIfam" id="TIGR02387">
    <property type="entry name" value="rpoC1_cyan"/>
    <property type="match status" value="1"/>
</dbReference>
<dbReference type="PANTHER" id="PTHR19376">
    <property type="entry name" value="DNA-DIRECTED RNA POLYMERASE"/>
    <property type="match status" value="1"/>
</dbReference>
<dbReference type="PANTHER" id="PTHR19376:SF54">
    <property type="entry name" value="DNA-DIRECTED RNA POLYMERASE SUBUNIT BETA"/>
    <property type="match status" value="1"/>
</dbReference>
<dbReference type="Pfam" id="PF04997">
    <property type="entry name" value="RNA_pol_Rpb1_1"/>
    <property type="match status" value="1"/>
</dbReference>
<dbReference type="Pfam" id="PF00623">
    <property type="entry name" value="RNA_pol_Rpb1_2"/>
    <property type="match status" value="2"/>
</dbReference>
<dbReference type="Pfam" id="PF04983">
    <property type="entry name" value="RNA_pol_Rpb1_3"/>
    <property type="match status" value="1"/>
</dbReference>
<dbReference type="SMART" id="SM00663">
    <property type="entry name" value="RPOLA_N"/>
    <property type="match status" value="1"/>
</dbReference>
<dbReference type="SUPFAM" id="SSF64484">
    <property type="entry name" value="beta and beta-prime subunits of DNA dependent RNA-polymerase"/>
    <property type="match status" value="1"/>
</dbReference>
<keyword id="KW-0240">DNA-directed RNA polymerase</keyword>
<keyword id="KW-0460">Magnesium</keyword>
<keyword id="KW-0479">Metal-binding</keyword>
<keyword id="KW-0548">Nucleotidyltransferase</keyword>
<keyword id="KW-1185">Reference proteome</keyword>
<keyword id="KW-0804">Transcription</keyword>
<keyword id="KW-0808">Transferase</keyword>
<keyword id="KW-0862">Zinc</keyword>
<organism>
    <name type="scientific">Gloeothece citriformis (strain PCC 7424)</name>
    <name type="common">Cyanothece sp. (strain PCC 7424)</name>
    <dbReference type="NCBI Taxonomy" id="65393"/>
    <lineage>
        <taxon>Bacteria</taxon>
        <taxon>Bacillati</taxon>
        <taxon>Cyanobacteriota</taxon>
        <taxon>Cyanophyceae</taxon>
        <taxon>Oscillatoriophycideae</taxon>
        <taxon>Chroococcales</taxon>
        <taxon>Aphanothecaceae</taxon>
        <taxon>Gloeothece</taxon>
        <taxon>Gloeothece citriformis</taxon>
    </lineage>
</organism>
<feature type="chain" id="PRO_1000141803" description="DNA-directed RNA polymerase subunit gamma">
    <location>
        <begin position="1"/>
        <end position="625"/>
    </location>
</feature>
<feature type="binding site" evidence="1">
    <location>
        <position position="71"/>
    </location>
    <ligand>
        <name>Zn(2+)</name>
        <dbReference type="ChEBI" id="CHEBI:29105"/>
    </ligand>
</feature>
<feature type="binding site" evidence="1">
    <location>
        <position position="73"/>
    </location>
    <ligand>
        <name>Zn(2+)</name>
        <dbReference type="ChEBI" id="CHEBI:29105"/>
    </ligand>
</feature>
<feature type="binding site" evidence="1">
    <location>
        <position position="86"/>
    </location>
    <ligand>
        <name>Zn(2+)</name>
        <dbReference type="ChEBI" id="CHEBI:29105"/>
    </ligand>
</feature>
<feature type="binding site" evidence="1">
    <location>
        <position position="89"/>
    </location>
    <ligand>
        <name>Zn(2+)</name>
        <dbReference type="ChEBI" id="CHEBI:29105"/>
    </ligand>
</feature>
<feature type="binding site" evidence="1">
    <location>
        <position position="467"/>
    </location>
    <ligand>
        <name>Mg(2+)</name>
        <dbReference type="ChEBI" id="CHEBI:18420"/>
    </ligand>
</feature>
<feature type="binding site" evidence="1">
    <location>
        <position position="469"/>
    </location>
    <ligand>
        <name>Mg(2+)</name>
        <dbReference type="ChEBI" id="CHEBI:18420"/>
    </ligand>
</feature>
<feature type="binding site" evidence="1">
    <location>
        <position position="471"/>
    </location>
    <ligand>
        <name>Mg(2+)</name>
        <dbReference type="ChEBI" id="CHEBI:18420"/>
    </ligand>
</feature>
<proteinExistence type="inferred from homology"/>
<name>RPOC1_GLOC7</name>
<sequence>MKQPTEQRFDYVKIGLASPDRIRQWGERTLPNGILVGEVTKPETINYRTLKPEMDGLFCERIFGPSKDWECWCGKYKRVRHRGIVCERCGVEVTESRVRRHRMGFIKLAAPVTHVWYLKGIPSYLSILLDMPLRDVEQIVYFNAYVVLDPGNSGNLQYKQLLTEDQWLEIEEQIYAEDSELYGIEVGIGAEAIERLLQELNLDEEAEKLREEIIESKGQKRAKLIKRLRVIDNFIATGSQPDWMVLTVIPVIPPDLRPMVQLDGGRFATSDLNDLYRRVINRNNRLSRLQEILAPEIIVRNEKRMLQEAVDALIDNGRRGRTVVGANNRPLKSLSDIIEGKQGRFRQNLLGKRVDYSGRSVIVVGPKLKIFQCGLPREMAIELFQPFVIHRLIKLGLVNNIKAAKKMIQRGDPQVWNVLEEVITGHPVLLNRAPTLHRLGIQAFEPILVEGRAIQLHPLVCPAFNADFDGDQMAVHVPLSLESQSEARLLMLACHNILSPATGRPIVAPSQDMVLGCYYLTSENPKAQKGAESYYSDLEDALMAYEQGLVDLHAYVWVRCDLEVVTEQPDDKPIKTETSEDGTVTKYYRHRKVRETADGKLICQFIHTTVGRIIYNKTVQDTLVA</sequence>
<gene>
    <name evidence="1" type="primary">rpoC1</name>
    <name type="ordered locus">PCC7424_2547</name>
</gene>
<comment type="function">
    <text evidence="1">DNA-dependent RNA polymerase catalyzes the transcription of DNA into RNA using the four ribonucleoside triphosphates as substrates.</text>
</comment>
<comment type="catalytic activity">
    <reaction evidence="1">
        <text>RNA(n) + a ribonucleoside 5'-triphosphate = RNA(n+1) + diphosphate</text>
        <dbReference type="Rhea" id="RHEA:21248"/>
        <dbReference type="Rhea" id="RHEA-COMP:14527"/>
        <dbReference type="Rhea" id="RHEA-COMP:17342"/>
        <dbReference type="ChEBI" id="CHEBI:33019"/>
        <dbReference type="ChEBI" id="CHEBI:61557"/>
        <dbReference type="ChEBI" id="CHEBI:140395"/>
        <dbReference type="EC" id="2.7.7.6"/>
    </reaction>
</comment>
<comment type="cofactor">
    <cofactor evidence="1">
        <name>Mg(2+)</name>
        <dbReference type="ChEBI" id="CHEBI:18420"/>
    </cofactor>
    <text evidence="1">Binds 1 Mg(2+) ion per subunit.</text>
</comment>
<comment type="cofactor">
    <cofactor evidence="1">
        <name>Zn(2+)</name>
        <dbReference type="ChEBI" id="CHEBI:29105"/>
    </cofactor>
    <text evidence="1">Binds 1 Zn(2+) ion per subunit.</text>
</comment>
<comment type="subunit">
    <text evidence="1">In cyanobacteria the RNAP catalytic core is composed of 2 alpha, 1 beta, 1 beta', 1 gamma and 1 omega subunit. When a sigma factor is associated with the core the holoenzyme is formed, which can initiate transcription.</text>
</comment>
<comment type="similarity">
    <text evidence="1">Belongs to the RNA polymerase beta' chain family. RpoC1 subfamily.</text>
</comment>
<reference key="1">
    <citation type="journal article" date="2011" name="MBio">
        <title>Novel metabolic attributes of the genus Cyanothece, comprising a group of unicellular nitrogen-fixing Cyanobacteria.</title>
        <authorList>
            <person name="Bandyopadhyay A."/>
            <person name="Elvitigala T."/>
            <person name="Welsh E."/>
            <person name="Stockel J."/>
            <person name="Liberton M."/>
            <person name="Min H."/>
            <person name="Sherman L.A."/>
            <person name="Pakrasi H.B."/>
        </authorList>
    </citation>
    <scope>NUCLEOTIDE SEQUENCE [LARGE SCALE GENOMIC DNA]</scope>
    <source>
        <strain>PCC 7424</strain>
    </source>
</reference>